<evidence type="ECO:0000250" key="1">
    <source>
        <dbReference type="UniProtKB" id="Q5J8M3"/>
    </source>
</evidence>
<evidence type="ECO:0000305" key="2"/>
<proteinExistence type="evidence at transcript level"/>
<name>EMC4_SALSA</name>
<reference key="1">
    <citation type="journal article" date="2010" name="BMC Genomics">
        <title>Salmo salar and Esox lucius full-length cDNA sequences reveal changes in evolutionary pressures on a post-tetraploidization genome.</title>
        <authorList>
            <person name="Leong J.S."/>
            <person name="Jantzen S.G."/>
            <person name="von Schalburg K.R."/>
            <person name="Cooper G.A."/>
            <person name="Messmer A.M."/>
            <person name="Liao N.Y."/>
            <person name="Munro S."/>
            <person name="Moore R."/>
            <person name="Holt R.A."/>
            <person name="Jones S.J."/>
            <person name="Davidson W.S."/>
            <person name="Koop B.F."/>
        </authorList>
    </citation>
    <scope>NUCLEOTIDE SEQUENCE [LARGE SCALE MRNA]</scope>
    <source>
        <tissue>Thyroid</tissue>
    </source>
</reference>
<protein>
    <recommendedName>
        <fullName>ER membrane protein complex subunit 4</fullName>
    </recommendedName>
    <alternativeName>
        <fullName>Transmembrane protein 85</fullName>
    </alternativeName>
</protein>
<dbReference type="EMBL" id="BT046968">
    <property type="protein sequence ID" value="ACI66769.1"/>
    <property type="molecule type" value="mRNA"/>
</dbReference>
<dbReference type="EMBL" id="BT048243">
    <property type="protein sequence ID" value="ACI68044.1"/>
    <property type="molecule type" value="mRNA"/>
</dbReference>
<dbReference type="SMR" id="B5XB24"/>
<dbReference type="STRING" id="8030.ENSSSAP00000093077"/>
<dbReference type="PaxDb" id="8030-ENSSSAP00000093077"/>
<dbReference type="Ensembl" id="ENSSSAT00070060117">
    <property type="protein sequence ID" value="ENSSSAP00070057611"/>
    <property type="gene ID" value="ENSSSAG00070037457"/>
</dbReference>
<dbReference type="KEGG" id="sasa:100196067"/>
<dbReference type="OrthoDB" id="35220at7898"/>
<dbReference type="Proteomes" id="UP000087266">
    <property type="component" value="Chromosome ssa07"/>
</dbReference>
<dbReference type="Bgee" id="ENSSSAG00000071911">
    <property type="expression patterns" value="Expressed in testis and 27 other cell types or tissues"/>
</dbReference>
<dbReference type="GO" id="GO:0072546">
    <property type="term" value="C:EMC complex"/>
    <property type="evidence" value="ECO:0000250"/>
    <property type="project" value="UniProtKB"/>
</dbReference>
<dbReference type="GO" id="GO:0005789">
    <property type="term" value="C:endoplasmic reticulum membrane"/>
    <property type="evidence" value="ECO:0000250"/>
    <property type="project" value="UniProtKB"/>
</dbReference>
<dbReference type="GO" id="GO:0016020">
    <property type="term" value="C:membrane"/>
    <property type="evidence" value="ECO:0000250"/>
    <property type="project" value="UniProtKB"/>
</dbReference>
<dbReference type="GO" id="GO:0045050">
    <property type="term" value="P:protein insertion into ER membrane by stop-transfer membrane-anchor sequence"/>
    <property type="evidence" value="ECO:0000250"/>
    <property type="project" value="UniProtKB"/>
</dbReference>
<dbReference type="GO" id="GO:0071816">
    <property type="term" value="P:tail-anchored membrane protein insertion into ER membrane"/>
    <property type="evidence" value="ECO:0000250"/>
    <property type="project" value="UniProtKB"/>
</dbReference>
<dbReference type="InterPro" id="IPR009445">
    <property type="entry name" value="TMEM85/Emc4"/>
</dbReference>
<dbReference type="PANTHER" id="PTHR19315">
    <property type="entry name" value="ER MEMBRANE PROTEIN COMPLEX SUBUNIT 4"/>
    <property type="match status" value="1"/>
</dbReference>
<dbReference type="Pfam" id="PF06417">
    <property type="entry name" value="EMC4"/>
    <property type="match status" value="1"/>
</dbReference>
<organism>
    <name type="scientific">Salmo salar</name>
    <name type="common">Atlantic salmon</name>
    <dbReference type="NCBI Taxonomy" id="8030"/>
    <lineage>
        <taxon>Eukaryota</taxon>
        <taxon>Metazoa</taxon>
        <taxon>Chordata</taxon>
        <taxon>Craniata</taxon>
        <taxon>Vertebrata</taxon>
        <taxon>Euteleostomi</taxon>
        <taxon>Actinopterygii</taxon>
        <taxon>Neopterygii</taxon>
        <taxon>Teleostei</taxon>
        <taxon>Protacanthopterygii</taxon>
        <taxon>Salmoniformes</taxon>
        <taxon>Salmonidae</taxon>
        <taxon>Salmoninae</taxon>
        <taxon>Salmo</taxon>
    </lineage>
</organism>
<keyword id="KW-0256">Endoplasmic reticulum</keyword>
<keyword id="KW-0472">Membrane</keyword>
<keyword id="KW-1185">Reference proteome</keyword>
<keyword id="KW-0812">Transmembrane</keyword>
<keyword id="KW-1133">Transmembrane helix</keyword>
<gene>
    <name type="primary">emc4</name>
    <name type="synonym">tmem85</name>
</gene>
<comment type="function">
    <text evidence="1">Part of the endoplasmic reticulum membrane protein complex (EMC) that enables the energy-independent insertion into endoplasmic reticulum membranes of newly synthesized membrane proteins. Preferentially accommodates proteins with transmembrane domains that are weakly hydrophobic or contain destabilizing features such as charged and aromatic residues. Involved in the cotranslational insertion of multi-pass membrane proteins in which stop-transfer membrane-anchor sequences become ER membrane spanning helices. It is also required for the post-translational insertion of tail-anchored/TA proteins in endoplasmic reticulum membranes. By mediating the proper cotranslational insertion of N-terminal transmembrane domains in an N-exo topology, with translocated N-terminus in the lumen of the ER, controls the topology of multi-pass membrane proteins like the G protein-coupled receptors. By regulating the insertion of various proteins in membranes, it is indirectly involved in many cellular processes.</text>
</comment>
<comment type="subunit">
    <text evidence="1">Component of the ER membrane protein complex (EMC).</text>
</comment>
<comment type="subcellular location">
    <subcellularLocation>
        <location evidence="1">Endoplasmic reticulum membrane</location>
        <topology evidence="1">Multi-pass membrane protein</topology>
    </subcellularLocation>
    <text evidence="1">Could also be a single-pass transmembrane protein with cytosolic N-terminus and lumenal C-terminus.</text>
</comment>
<comment type="similarity">
    <text evidence="2">Belongs to the EMC4 family.</text>
</comment>
<sequence>MASPGGQGGGAVSTRGAGARRMKWALELSLGNARGRGDRQSNQGDVMYPIGYSDKPVPDTSIQETDKNLVEKRCWDVALGPLKQIPMNLFIMYMSGNTISIFPIMMVCMMAWRPIQALMSMSATFKLLENSNQQWLQGLVYSVGNLLGSALAIYKCQSMGLLPTHSSDWLAFIEPPQRMEIMGGGMVL</sequence>
<accession>B5XB24</accession>
<accession>B5X7E9</accession>
<feature type="chain" id="PRO_0000375880" description="ER membrane protein complex subunit 4">
    <location>
        <begin position="1"/>
        <end position="188"/>
    </location>
</feature>
<feature type="topological domain" description="Cytoplasmic" evidence="1">
    <location>
        <begin position="1"/>
        <end position="71"/>
    </location>
</feature>
<feature type="transmembrane region" description="Helical" evidence="1">
    <location>
        <begin position="72"/>
        <end position="92"/>
    </location>
</feature>
<feature type="topological domain" description="Lumenal" evidence="1">
    <location>
        <begin position="93"/>
        <end position="103"/>
    </location>
</feature>
<feature type="transmembrane region" description="Helical" evidence="1">
    <location>
        <begin position="104"/>
        <end position="125"/>
    </location>
</feature>
<feature type="topological domain" description="Cytoplasmic" evidence="1">
    <location>
        <begin position="126"/>
        <end position="132"/>
    </location>
</feature>
<feature type="transmembrane region" description="Helical" evidence="1">
    <location>
        <begin position="133"/>
        <end position="153"/>
    </location>
</feature>
<feature type="topological domain" description="Lumenal" evidence="1">
    <location>
        <begin position="154"/>
        <end position="188"/>
    </location>
</feature>
<feature type="sequence conflict" description="In Ref. 1; ACI66769." evidence="2" ref="1">
    <original>I</original>
    <variation>V</variation>
    <location>
        <position position="173"/>
    </location>
</feature>